<proteinExistence type="evidence at transcript level"/>
<feature type="transit peptide" description="Mitochondrion">
    <location>
        <begin position="1"/>
        <end position="24"/>
    </location>
</feature>
<feature type="chain" id="PRO_0000003606" description="Cytochrome P450 11B1, mitochondrial">
    <location>
        <begin position="25"/>
        <end position="503"/>
    </location>
</feature>
<feature type="binding site" description="axial binding residue" evidence="4">
    <location>
        <position position="450"/>
    </location>
    <ligand>
        <name>heme</name>
        <dbReference type="ChEBI" id="CHEBI:30413"/>
    </ligand>
    <ligandPart>
        <name>Fe</name>
        <dbReference type="ChEBI" id="CHEBI:18248"/>
    </ligandPart>
</feature>
<feature type="sequence conflict" description="In Ref. 2; AAB64248/AAB64249." evidence="5" ref="2">
    <original>R</original>
    <variation>S</variation>
    <location>
        <position position="99"/>
    </location>
</feature>
<feature type="sequence conflict" description="In Ref. 1; AAA62308." evidence="5" ref="1">
    <original>A</original>
    <variation>G</variation>
    <location>
        <position position="189"/>
    </location>
</feature>
<feature type="sequence conflict" description="In Ref. 1; AAA62308." evidence="5" ref="1">
    <original>P</original>
    <variation>R</variation>
    <location>
        <position position="439"/>
    </location>
</feature>
<feature type="sequence conflict" description="In Ref. 2; AAB64248/AAB64249." evidence="5" ref="2">
    <original>R</original>
    <variation>G</variation>
    <location>
        <position position="500"/>
    </location>
</feature>
<accession>P51663</accession>
<accession>O19181</accession>
<comment type="function">
    <text evidence="2">A cytochrome P450 monooxygenase that catalyzes the biosynthesis of aldosterone and other adrenal corticoids. Differing from other species (such as human, rat and mice), it is able to catalyze three sequential oxidative reactions of 11-deoxycorticosterone (21-hydroxyprogesterone), namely 11-beta hydroxylation, followed by two successive oxidations at C18 yielding 18-hydroxy and then 18-oxo intermediates, and ending with the formation of aldosterone. Steroid 11beta, 18- and 19-hydroxylase. Mechanistically, uses molecular oxygen inserting one oxygen atom into a substrate and reducing the second into a water molecule. Two electrons are provided by NADPH via a two-protein mitochondrial transfer system comprising flavoprotein FDXR (adrenodoxin/ferredoxin reductase) and nonheme iron-sulfur protein FDX1 or FDX2 (adrenodoxin/ferredoxin).</text>
</comment>
<comment type="catalytic activity">
    <reaction evidence="2">
        <text>a steroid + 2 reduced [adrenodoxin] + O2 + 2 H(+) = an 11beta-hydroxysteroid + 2 oxidized [adrenodoxin] + H2O</text>
        <dbReference type="Rhea" id="RHEA:15629"/>
        <dbReference type="Rhea" id="RHEA-COMP:9998"/>
        <dbReference type="Rhea" id="RHEA-COMP:9999"/>
        <dbReference type="ChEBI" id="CHEBI:15377"/>
        <dbReference type="ChEBI" id="CHEBI:15378"/>
        <dbReference type="ChEBI" id="CHEBI:15379"/>
        <dbReference type="ChEBI" id="CHEBI:33737"/>
        <dbReference type="ChEBI" id="CHEBI:33738"/>
        <dbReference type="ChEBI" id="CHEBI:35341"/>
        <dbReference type="ChEBI" id="CHEBI:35346"/>
        <dbReference type="EC" id="1.14.15.4"/>
    </reaction>
    <physiologicalReaction direction="left-to-right" evidence="2">
        <dbReference type="Rhea" id="RHEA:15630"/>
    </physiologicalReaction>
</comment>
<comment type="catalytic activity">
    <reaction evidence="3">
        <text>11-deoxycortisol + 2 reduced [adrenodoxin] + O2 + 2 H(+) = cortisol + 2 oxidized [adrenodoxin] + H2O</text>
        <dbReference type="Rhea" id="RHEA:46100"/>
        <dbReference type="Rhea" id="RHEA-COMP:9998"/>
        <dbReference type="Rhea" id="RHEA-COMP:9999"/>
        <dbReference type="ChEBI" id="CHEBI:15377"/>
        <dbReference type="ChEBI" id="CHEBI:15378"/>
        <dbReference type="ChEBI" id="CHEBI:15379"/>
        <dbReference type="ChEBI" id="CHEBI:17650"/>
        <dbReference type="ChEBI" id="CHEBI:28324"/>
        <dbReference type="ChEBI" id="CHEBI:33737"/>
        <dbReference type="ChEBI" id="CHEBI:33738"/>
    </reaction>
    <physiologicalReaction direction="left-to-right" evidence="3">
        <dbReference type="Rhea" id="RHEA:46101"/>
    </physiologicalReaction>
</comment>
<comment type="catalytic activity">
    <reaction evidence="2">
        <text>21-hydroxyprogesterone + 2 reduced [adrenodoxin] + O2 + 2 H(+) = corticosterone + 2 oxidized [adrenodoxin] + H2O</text>
        <dbReference type="Rhea" id="RHEA:46104"/>
        <dbReference type="Rhea" id="RHEA-COMP:9998"/>
        <dbReference type="Rhea" id="RHEA-COMP:9999"/>
        <dbReference type="ChEBI" id="CHEBI:15377"/>
        <dbReference type="ChEBI" id="CHEBI:15378"/>
        <dbReference type="ChEBI" id="CHEBI:15379"/>
        <dbReference type="ChEBI" id="CHEBI:16827"/>
        <dbReference type="ChEBI" id="CHEBI:16973"/>
        <dbReference type="ChEBI" id="CHEBI:33737"/>
        <dbReference type="ChEBI" id="CHEBI:33738"/>
    </reaction>
    <physiologicalReaction direction="left-to-right" evidence="2">
        <dbReference type="Rhea" id="RHEA:46105"/>
    </physiologicalReaction>
</comment>
<comment type="catalytic activity">
    <reaction evidence="2">
        <text>corticosterone + 2 reduced [adrenodoxin] + O2 + 2 H(+) = 18-hydroxycorticosterone + 2 oxidized [adrenodoxin] + H2O</text>
        <dbReference type="Rhea" id="RHEA:11872"/>
        <dbReference type="Rhea" id="RHEA-COMP:9998"/>
        <dbReference type="Rhea" id="RHEA-COMP:9999"/>
        <dbReference type="ChEBI" id="CHEBI:15377"/>
        <dbReference type="ChEBI" id="CHEBI:15378"/>
        <dbReference type="ChEBI" id="CHEBI:15379"/>
        <dbReference type="ChEBI" id="CHEBI:16485"/>
        <dbReference type="ChEBI" id="CHEBI:16827"/>
        <dbReference type="ChEBI" id="CHEBI:33737"/>
        <dbReference type="ChEBI" id="CHEBI:33738"/>
        <dbReference type="EC" id="1.14.15.5"/>
    </reaction>
    <physiologicalReaction direction="left-to-right" evidence="2">
        <dbReference type="Rhea" id="RHEA:11873"/>
    </physiologicalReaction>
</comment>
<comment type="catalytic activity">
    <reaction evidence="2">
        <text>18-hydroxycorticosterone + 2 reduced [adrenodoxin] + O2 + 2 H(+) = aldosterone + 2 oxidized [adrenodoxin] + 2 H2O</text>
        <dbReference type="Rhea" id="RHEA:50792"/>
        <dbReference type="Rhea" id="RHEA-COMP:9998"/>
        <dbReference type="Rhea" id="RHEA-COMP:9999"/>
        <dbReference type="ChEBI" id="CHEBI:15377"/>
        <dbReference type="ChEBI" id="CHEBI:15378"/>
        <dbReference type="ChEBI" id="CHEBI:15379"/>
        <dbReference type="ChEBI" id="CHEBI:16485"/>
        <dbReference type="ChEBI" id="CHEBI:27584"/>
        <dbReference type="ChEBI" id="CHEBI:33737"/>
        <dbReference type="ChEBI" id="CHEBI:33738"/>
    </reaction>
    <physiologicalReaction direction="left-to-right" evidence="2">
        <dbReference type="Rhea" id="RHEA:50793"/>
    </physiologicalReaction>
</comment>
<comment type="catalytic activity">
    <reaction evidence="2">
        <text>21-hydroxyprogesterone + 2 reduced [adrenodoxin] + O2 + 2 H(+) = 19-hydroxy-11-deoxycorticosterone + 2 oxidized [adrenodoxin] + H2O</text>
        <dbReference type="Rhea" id="RHEA:76155"/>
        <dbReference type="Rhea" id="RHEA-COMP:9998"/>
        <dbReference type="Rhea" id="RHEA-COMP:9999"/>
        <dbReference type="ChEBI" id="CHEBI:15377"/>
        <dbReference type="ChEBI" id="CHEBI:15378"/>
        <dbReference type="ChEBI" id="CHEBI:15379"/>
        <dbReference type="ChEBI" id="CHEBI:16973"/>
        <dbReference type="ChEBI" id="CHEBI:33737"/>
        <dbReference type="ChEBI" id="CHEBI:33738"/>
        <dbReference type="ChEBI" id="CHEBI:195167"/>
    </reaction>
    <physiologicalReaction direction="left-to-right" evidence="2">
        <dbReference type="Rhea" id="RHEA:76156"/>
    </physiologicalReaction>
</comment>
<comment type="catalytic activity">
    <reaction evidence="2">
        <text>19-hydroxy-11-deoxycorticosterone + 2 reduced [adrenodoxin] + O2 + 2 H(+) = 19-oxo-11-deoxycorticosterone + 2 oxidized [adrenodoxin] + 2 H2O</text>
        <dbReference type="Rhea" id="RHEA:76439"/>
        <dbReference type="Rhea" id="RHEA-COMP:9998"/>
        <dbReference type="Rhea" id="RHEA-COMP:9999"/>
        <dbReference type="ChEBI" id="CHEBI:15377"/>
        <dbReference type="ChEBI" id="CHEBI:15378"/>
        <dbReference type="ChEBI" id="CHEBI:15379"/>
        <dbReference type="ChEBI" id="CHEBI:33737"/>
        <dbReference type="ChEBI" id="CHEBI:33738"/>
        <dbReference type="ChEBI" id="CHEBI:174650"/>
        <dbReference type="ChEBI" id="CHEBI:195167"/>
    </reaction>
    <physiologicalReaction direction="left-to-right" evidence="2">
        <dbReference type="Rhea" id="RHEA:76440"/>
    </physiologicalReaction>
</comment>
<comment type="cofactor">
    <cofactor evidence="4">
        <name>heme</name>
        <dbReference type="ChEBI" id="CHEBI:30413"/>
    </cofactor>
</comment>
<comment type="pathway">
    <text evidence="3">Steroid biosynthesis; glucocorticoid biosynthesis.</text>
</comment>
<comment type="pathway">
    <text evidence="3">Steroid hormone biosynthesis.</text>
</comment>
<comment type="subcellular location">
    <subcellularLocation>
        <location evidence="1">Mitochondrion inner membrane</location>
        <topology evidence="1">Peripheral membrane protein</topology>
    </subcellularLocation>
</comment>
<comment type="similarity">
    <text evidence="5">Belongs to the cytochrome P450 family.</text>
</comment>
<gene>
    <name type="primary">CYP11B1</name>
</gene>
<organism>
    <name type="scientific">Ovis aries</name>
    <name type="common">Sheep</name>
    <dbReference type="NCBI Taxonomy" id="9940"/>
    <lineage>
        <taxon>Eukaryota</taxon>
        <taxon>Metazoa</taxon>
        <taxon>Chordata</taxon>
        <taxon>Craniata</taxon>
        <taxon>Vertebrata</taxon>
        <taxon>Euteleostomi</taxon>
        <taxon>Mammalia</taxon>
        <taxon>Eutheria</taxon>
        <taxon>Laurasiatheria</taxon>
        <taxon>Artiodactyla</taxon>
        <taxon>Ruminantia</taxon>
        <taxon>Pecora</taxon>
        <taxon>Bovidae</taxon>
        <taxon>Caprinae</taxon>
        <taxon>Ovis</taxon>
    </lineage>
</organism>
<name>C11B1_SHEEP</name>
<sequence length="503" mass="57784">MALWAKARVWMAGPWLSLHRARPLGTRASAAPKAVLPFEAMPRCPGNKWMRVLQIWKEQGSENMHLDMHQTFQELGPIFRYDVGGRHMVFVMLPEDVERLQQAESLHPQRMLLEPWLAYRQARGHKCGVFLLNGPQWRLDRLRLNPDVLSLPALQKYTPLVDGVARDFSQTLKARVLQNARGSLTLDIAPSVFRYTIEASTLVLYGERLGLLTQQPNPDSLNFIHALEAMFKSTVQLMFVPRRLSRWTSSSMWREHFEAWDYIFQYANRAIQRIYQELALGHPWHYSGIVAELLMRADMTLDTIKANTIDLTAGSVDTTAFPLLMTLFELARNPEVQQALRQESLVAEARISENPQRATTELPLLRAALKETLRLYPVGITLERQVSSDLVLQNYHIPAGTLVKVLLYSLGRNPAVFARPESYHPQRWLDRQGSGSRFPHLAFGFGMRQCLGRRVAEVEMLLLLHHVLKNFLVETLAQEDIKMVYRFILMPSTLPLFTFRAIQ</sequence>
<reference key="1">
    <citation type="journal article" date="1995" name="Biochim. Biophys. Acta">
        <title>Cloning and expression analysis of a cytochrome P-450(11 beta) cDNA in sheep.</title>
        <authorList>
            <person name="Boon W.C."/>
            <person name="Roche P.J."/>
            <person name="Hammond V.E."/>
            <person name="Jeyaseelan K."/>
            <person name="Crawford R.J."/>
            <person name="Coghlan J.P."/>
        </authorList>
    </citation>
    <scope>NUCLEOTIDE SEQUENCE [MRNA]</scope>
    <source>
        <strain>Merino</strain>
        <tissue>Adrenal cortex</tissue>
    </source>
</reference>
<reference key="2">
    <citation type="journal article" date="1998" name="DNA Seq.">
        <title>Structure of an ovine CYP11B1 gene.</title>
        <authorList>
            <person name="Anwar A."/>
            <person name="Coghlan J.P."/>
            <person name="Jeyaseelan K."/>
        </authorList>
    </citation>
    <scope>NUCLEOTIDE SEQUENCE [GENOMIC DNA / MRNA]</scope>
    <source>
        <tissue>Adrenal gland</tissue>
        <tissue>Liver</tissue>
    </source>
</reference>
<reference key="3">
    <citation type="journal article" date="1994" name="Biochem. Mol. Biol. Int.">
        <title>Molecular cloning and characterization of the ovine CYP11B1 promoter.</title>
        <authorList>
            <person name="Anwar A."/>
            <person name="Jeyaseelan K."/>
            <person name="Coghlan J.P."/>
        </authorList>
    </citation>
    <scope>NUCLEOTIDE SEQUENCE [GENOMIC DNA] OF 1-77</scope>
</reference>
<dbReference type="EC" id="1.14.15.4" evidence="2"/>
<dbReference type="EC" id="1.14.15.5" evidence="2"/>
<dbReference type="EMBL" id="L34337">
    <property type="protein sequence ID" value="AAA62308.1"/>
    <property type="molecule type" value="mRNA"/>
</dbReference>
<dbReference type="EMBL" id="L47569">
    <property type="protein sequence ID" value="AAA81576.1"/>
    <property type="molecule type" value="Genomic_DNA"/>
</dbReference>
<dbReference type="EMBL" id="U78478">
    <property type="protein sequence ID" value="AAB64249.1"/>
    <property type="molecule type" value="Genomic_DNA"/>
</dbReference>
<dbReference type="EMBL" id="U78477">
    <property type="protein sequence ID" value="AAB64248.1"/>
    <property type="molecule type" value="mRNA"/>
</dbReference>
<dbReference type="EMBL" id="L28716">
    <property type="protein sequence ID" value="AAA83384.1"/>
    <property type="molecule type" value="Genomic_DNA"/>
</dbReference>
<dbReference type="PIR" id="S52085">
    <property type="entry name" value="S52085"/>
</dbReference>
<dbReference type="RefSeq" id="NP_001068568.1">
    <property type="nucleotide sequence ID" value="NM_001075100.2"/>
</dbReference>
<dbReference type="SMR" id="P51663"/>
<dbReference type="STRING" id="9940.ENSOARP00000000890"/>
<dbReference type="PaxDb" id="9940-ENSOARP00000000890"/>
<dbReference type="Ensembl" id="ENSOART00185062819">
    <property type="protein sequence ID" value="ENSOARP00185031842"/>
    <property type="gene ID" value="ENSOARG00185037558"/>
</dbReference>
<dbReference type="Ensembl" id="ENSOART00220042868">
    <property type="protein sequence ID" value="ENSOARP00220023089"/>
    <property type="gene ID" value="ENSOARG00220025665"/>
</dbReference>
<dbReference type="GeneID" id="767576"/>
<dbReference type="KEGG" id="oas:767576"/>
<dbReference type="CTD" id="1584"/>
<dbReference type="eggNOG" id="KOG0159">
    <property type="taxonomic scope" value="Eukaryota"/>
</dbReference>
<dbReference type="OrthoDB" id="3945418at2759"/>
<dbReference type="UniPathway" id="UPA00788"/>
<dbReference type="Proteomes" id="UP000002356">
    <property type="component" value="Unplaced"/>
</dbReference>
<dbReference type="GO" id="GO:0005743">
    <property type="term" value="C:mitochondrial inner membrane"/>
    <property type="evidence" value="ECO:0007669"/>
    <property type="project" value="UniProtKB-SubCell"/>
</dbReference>
<dbReference type="GO" id="GO:0047783">
    <property type="term" value="F:corticosterone 18-monooxygenase activity"/>
    <property type="evidence" value="ECO:0007669"/>
    <property type="project" value="TreeGrafter"/>
</dbReference>
<dbReference type="GO" id="GO:0020037">
    <property type="term" value="F:heme binding"/>
    <property type="evidence" value="ECO:0007669"/>
    <property type="project" value="InterPro"/>
</dbReference>
<dbReference type="GO" id="GO:0005506">
    <property type="term" value="F:iron ion binding"/>
    <property type="evidence" value="ECO:0007669"/>
    <property type="project" value="InterPro"/>
</dbReference>
<dbReference type="GO" id="GO:0004507">
    <property type="term" value="F:steroid 11-beta-monooxygenase activity"/>
    <property type="evidence" value="ECO:0007669"/>
    <property type="project" value="UniProtKB-EC"/>
</dbReference>
<dbReference type="GO" id="GO:0032342">
    <property type="term" value="P:aldosterone biosynthetic process"/>
    <property type="evidence" value="ECO:0007669"/>
    <property type="project" value="TreeGrafter"/>
</dbReference>
<dbReference type="GO" id="GO:0071375">
    <property type="term" value="P:cellular response to peptide hormone stimulus"/>
    <property type="evidence" value="ECO:0007669"/>
    <property type="project" value="TreeGrafter"/>
</dbReference>
<dbReference type="GO" id="GO:0008203">
    <property type="term" value="P:cholesterol metabolic process"/>
    <property type="evidence" value="ECO:0007669"/>
    <property type="project" value="TreeGrafter"/>
</dbReference>
<dbReference type="GO" id="GO:0034650">
    <property type="term" value="P:cortisol metabolic process"/>
    <property type="evidence" value="ECO:0007669"/>
    <property type="project" value="TreeGrafter"/>
</dbReference>
<dbReference type="GO" id="GO:0006704">
    <property type="term" value="P:glucocorticoid biosynthetic process"/>
    <property type="evidence" value="ECO:0007669"/>
    <property type="project" value="UniProtKB-UniPathway"/>
</dbReference>
<dbReference type="FunFam" id="1.10.630.10:FF:000015">
    <property type="entry name" value="Cholesterol side-chain cleavage enzyme, mitochondrial"/>
    <property type="match status" value="1"/>
</dbReference>
<dbReference type="Gene3D" id="1.10.630.10">
    <property type="entry name" value="Cytochrome P450"/>
    <property type="match status" value="1"/>
</dbReference>
<dbReference type="InterPro" id="IPR050479">
    <property type="entry name" value="CYP11_CYP27_families"/>
</dbReference>
<dbReference type="InterPro" id="IPR001128">
    <property type="entry name" value="Cyt_P450"/>
</dbReference>
<dbReference type="InterPro" id="IPR017972">
    <property type="entry name" value="Cyt_P450_CS"/>
</dbReference>
<dbReference type="InterPro" id="IPR002401">
    <property type="entry name" value="Cyt_P450_E_grp-I"/>
</dbReference>
<dbReference type="InterPro" id="IPR036396">
    <property type="entry name" value="Cyt_P450_sf"/>
</dbReference>
<dbReference type="PANTHER" id="PTHR24279">
    <property type="entry name" value="CYTOCHROME P450"/>
    <property type="match status" value="1"/>
</dbReference>
<dbReference type="PANTHER" id="PTHR24279:SF1">
    <property type="entry name" value="CYTOCHROME P450 11B2, MITOCHONDRIAL"/>
    <property type="match status" value="1"/>
</dbReference>
<dbReference type="Pfam" id="PF00067">
    <property type="entry name" value="p450"/>
    <property type="match status" value="1"/>
</dbReference>
<dbReference type="PRINTS" id="PR00463">
    <property type="entry name" value="EP450I"/>
</dbReference>
<dbReference type="PRINTS" id="PR00385">
    <property type="entry name" value="P450"/>
</dbReference>
<dbReference type="SUPFAM" id="SSF48264">
    <property type="entry name" value="Cytochrome P450"/>
    <property type="match status" value="1"/>
</dbReference>
<dbReference type="PROSITE" id="PS00086">
    <property type="entry name" value="CYTOCHROME_P450"/>
    <property type="match status" value="1"/>
</dbReference>
<keyword id="KW-0349">Heme</keyword>
<keyword id="KW-0408">Iron</keyword>
<keyword id="KW-0472">Membrane</keyword>
<keyword id="KW-0479">Metal-binding</keyword>
<keyword id="KW-0496">Mitochondrion</keyword>
<keyword id="KW-0999">Mitochondrion inner membrane</keyword>
<keyword id="KW-0503">Monooxygenase</keyword>
<keyword id="KW-0560">Oxidoreductase</keyword>
<keyword id="KW-1185">Reference proteome</keyword>
<keyword id="KW-0755">Steroidogenesis</keyword>
<keyword id="KW-0809">Transit peptide</keyword>
<protein>
    <recommendedName>
        <fullName>Cytochrome P450 11B1, mitochondrial</fullName>
    </recommendedName>
    <alternativeName>
        <fullName>CYPXIB1</fullName>
    </alternativeName>
    <alternativeName>
        <fullName>Cytochrome P450C11</fullName>
    </alternativeName>
    <alternativeName>
        <fullName evidence="2">Steroid 11-beta-hydroxylase, CYP11B1</fullName>
        <ecNumber evidence="2">1.14.15.4</ecNumber>
        <ecNumber evidence="2">1.14.15.5</ecNumber>
    </alternativeName>
</protein>
<evidence type="ECO:0000250" key="1">
    <source>
        <dbReference type="UniProtKB" id="P14137"/>
    </source>
</evidence>
<evidence type="ECO:0000250" key="2">
    <source>
        <dbReference type="UniProtKB" id="P15150"/>
    </source>
</evidence>
<evidence type="ECO:0000250" key="3">
    <source>
        <dbReference type="UniProtKB" id="P15538"/>
    </source>
</evidence>
<evidence type="ECO:0000250" key="4">
    <source>
        <dbReference type="UniProtKB" id="P19099"/>
    </source>
</evidence>
<evidence type="ECO:0000305" key="5"/>